<sequence>MSIRVTQKSYKMSTSGPRAFSSRSFTSGPGARISSSSFSRVGSSSSSFRGSMGTGVGLGGFGGAGVGGITAVTVNQSLLSPLKLEVDPNIQAVRTQEKEQIKSLNNKFASFIDKVRFLEQQNKMLETKWSLLQQQKTSRSNMDNMFESYINNLRRQLEALGQEKLKLEAELGNMQGLVEDFKNKYEDEINKRTEMENEFVLIKKDVDEAYMNKVELESRLEGLTDEINFLRQIHEEEIRELQSQISDTSVVLSMDNSRSLDMDGIIAEVRAQYEDIANRSRAEAETMYQIKYEELQTLAGKHGDDLRRTKTEISEMNRNINRLQAEIEALKGQRASLEAAIADAEQRGEMAIKDAQTKLAELEAALQRAKQDMARQLREYQELMNVKLALDIEITTYRKLLEGEESRLESGMQNMSIHTKTTSGYSGGLSSSYGGLTSPGFSYGMSSFQPGFGSAGGSNTFSRTTKAVVVKKIETRDGKLVSESSDVVSK</sequence>
<evidence type="ECO:0000250" key="1"/>
<evidence type="ECO:0000250" key="2">
    <source>
        <dbReference type="UniProtKB" id="P05787"/>
    </source>
</evidence>
<evidence type="ECO:0000250" key="3">
    <source>
        <dbReference type="UniProtKB" id="Q10758"/>
    </source>
</evidence>
<evidence type="ECO:0000255" key="4">
    <source>
        <dbReference type="PROSITE-ProRule" id="PRU01188"/>
    </source>
</evidence>
<evidence type="ECO:0000256" key="5">
    <source>
        <dbReference type="SAM" id="MobiDB-lite"/>
    </source>
</evidence>
<evidence type="ECO:0000269" key="6">
    <source>
    </source>
</evidence>
<evidence type="ECO:0000269" key="7">
    <source>
    </source>
</evidence>
<evidence type="ECO:0000269" key="8">
    <source>
    </source>
</evidence>
<evidence type="ECO:0000269" key="9">
    <source>
    </source>
</evidence>
<evidence type="ECO:0000305" key="10"/>
<evidence type="ECO:0007744" key="11">
    <source>
    </source>
</evidence>
<evidence type="ECO:0007744" key="12">
    <source>
    </source>
</evidence>
<keyword id="KW-0007">Acetylation</keyword>
<keyword id="KW-0175">Coiled coil</keyword>
<keyword id="KW-0963">Cytoplasm</keyword>
<keyword id="KW-0903">Direct protein sequencing</keyword>
<keyword id="KW-0325">Glycoprotein</keyword>
<keyword id="KW-0403">Intermediate filament</keyword>
<keyword id="KW-1017">Isopeptide bond</keyword>
<keyword id="KW-0416">Keratin</keyword>
<keyword id="KW-0488">Methylation</keyword>
<keyword id="KW-0539">Nucleus</keyword>
<keyword id="KW-0597">Phosphoprotein</keyword>
<keyword id="KW-1185">Reference proteome</keyword>
<keyword id="KW-0832">Ubl conjugation</keyword>
<proteinExistence type="evidence at protein level"/>
<dbReference type="EMBL" id="X12789">
    <property type="protein sequence ID" value="CAA31278.1"/>
    <property type="molecule type" value="mRNA"/>
</dbReference>
<dbReference type="EMBL" id="X15662">
    <property type="protein sequence ID" value="CAA33697.1"/>
    <property type="molecule type" value="Genomic_DNA"/>
</dbReference>
<dbReference type="EMBL" id="M21836">
    <property type="protein sequence ID" value="AAA37550.1"/>
    <property type="molecule type" value="mRNA"/>
</dbReference>
<dbReference type="EMBL" id="M21836">
    <property type="protein sequence ID" value="AAA37551.1"/>
    <property type="status" value="ALT_INIT"/>
    <property type="molecule type" value="mRNA"/>
</dbReference>
<dbReference type="EMBL" id="M22831">
    <property type="protein sequence ID" value="AAA37548.1"/>
    <property type="molecule type" value="mRNA"/>
</dbReference>
<dbReference type="EMBL" id="D90360">
    <property type="protein sequence ID" value="BAA14375.1"/>
    <property type="molecule type" value="Genomic_DNA"/>
</dbReference>
<dbReference type="EMBL" id="AK077597">
    <property type="protein sequence ID" value="BAC36888.1"/>
    <property type="molecule type" value="mRNA"/>
</dbReference>
<dbReference type="EMBL" id="AK145546">
    <property type="protein sequence ID" value="BAE26499.1"/>
    <property type="molecule type" value="mRNA"/>
</dbReference>
<dbReference type="EMBL" id="AK145679">
    <property type="protein sequence ID" value="BAE26585.1"/>
    <property type="molecule type" value="mRNA"/>
</dbReference>
<dbReference type="EMBL" id="AK145777">
    <property type="protein sequence ID" value="BAE26646.1"/>
    <property type="molecule type" value="mRNA"/>
</dbReference>
<dbReference type="EMBL" id="AK146948">
    <property type="protein sequence ID" value="BAE27557.1"/>
    <property type="molecule type" value="mRNA"/>
</dbReference>
<dbReference type="EMBL" id="AK147044">
    <property type="protein sequence ID" value="BAE27630.1"/>
    <property type="molecule type" value="mRNA"/>
</dbReference>
<dbReference type="EMBL" id="AK166737">
    <property type="protein sequence ID" value="BAE38980.1"/>
    <property type="molecule type" value="mRNA"/>
</dbReference>
<dbReference type="EMBL" id="AK166768">
    <property type="protein sequence ID" value="BAE39006.1"/>
    <property type="molecule type" value="mRNA"/>
</dbReference>
<dbReference type="EMBL" id="AK166854">
    <property type="protein sequence ID" value="BAE39072.1"/>
    <property type="molecule type" value="mRNA"/>
</dbReference>
<dbReference type="EMBL" id="AK166960">
    <property type="protein sequence ID" value="BAE39143.1"/>
    <property type="molecule type" value="mRNA"/>
</dbReference>
<dbReference type="EMBL" id="AK166993">
    <property type="protein sequence ID" value="BAE39172.1"/>
    <property type="molecule type" value="mRNA"/>
</dbReference>
<dbReference type="EMBL" id="AK167120">
    <property type="protein sequence ID" value="BAE39268.1"/>
    <property type="molecule type" value="mRNA"/>
</dbReference>
<dbReference type="EMBL" id="AK167269">
    <property type="protein sequence ID" value="BAE39382.1"/>
    <property type="molecule type" value="mRNA"/>
</dbReference>
<dbReference type="EMBL" id="AK167471">
    <property type="protein sequence ID" value="BAE39554.1"/>
    <property type="molecule type" value="mRNA"/>
</dbReference>
<dbReference type="EMBL" id="AK168522">
    <property type="protein sequence ID" value="BAE40401.1"/>
    <property type="molecule type" value="mRNA"/>
</dbReference>
<dbReference type="EMBL" id="AK168540">
    <property type="protein sequence ID" value="BAE40418.1"/>
    <property type="molecule type" value="mRNA"/>
</dbReference>
<dbReference type="EMBL" id="AK168561">
    <property type="protein sequence ID" value="BAE40434.1"/>
    <property type="molecule type" value="mRNA"/>
</dbReference>
<dbReference type="EMBL" id="AK168726">
    <property type="protein sequence ID" value="BAE40567.1"/>
    <property type="molecule type" value="mRNA"/>
</dbReference>
<dbReference type="EMBL" id="AK168910">
    <property type="protein sequence ID" value="BAE40723.1"/>
    <property type="molecule type" value="mRNA"/>
</dbReference>
<dbReference type="EMBL" id="AK169136">
    <property type="protein sequence ID" value="BAE40915.1"/>
    <property type="molecule type" value="mRNA"/>
</dbReference>
<dbReference type="EMBL" id="AK169691">
    <property type="protein sequence ID" value="BAE41308.1"/>
    <property type="molecule type" value="mRNA"/>
</dbReference>
<dbReference type="EMBL" id="BC094009">
    <property type="protein sequence ID" value="AAH94009.1"/>
    <property type="molecule type" value="mRNA"/>
</dbReference>
<dbReference type="EMBL" id="BC106154">
    <property type="protein sequence ID" value="AAI06155.1"/>
    <property type="molecule type" value="mRNA"/>
</dbReference>
<dbReference type="CCDS" id="CCDS27868.1"/>
<dbReference type="PIR" id="JS0658">
    <property type="entry name" value="JS0658"/>
</dbReference>
<dbReference type="PIR" id="JT0407">
    <property type="entry name" value="JT0407"/>
</dbReference>
<dbReference type="PIR" id="S05474">
    <property type="entry name" value="S05474"/>
</dbReference>
<dbReference type="RefSeq" id="NP_112447.2">
    <property type="nucleotide sequence ID" value="NM_031170.2"/>
</dbReference>
<dbReference type="SMR" id="P11679"/>
<dbReference type="BioGRID" id="201037">
    <property type="interactions" value="19"/>
</dbReference>
<dbReference type="ComplexPortal" id="CPX-5868">
    <property type="entry name" value="Keratin-8 - Keratin-18 dimer complex"/>
</dbReference>
<dbReference type="FunCoup" id="P11679">
    <property type="interactions" value="786"/>
</dbReference>
<dbReference type="IntAct" id="P11679">
    <property type="interactions" value="3"/>
</dbReference>
<dbReference type="MINT" id="P11679"/>
<dbReference type="STRING" id="10090.ENSMUSP00000023952"/>
<dbReference type="GlyGen" id="P11679">
    <property type="glycosylation" value="2 sites, 1 N-linked glycan (1 site), 1 O-linked glycan (1 site)"/>
</dbReference>
<dbReference type="iPTMnet" id="P11679"/>
<dbReference type="PhosphoSitePlus" id="P11679"/>
<dbReference type="jPOST" id="P11679"/>
<dbReference type="PaxDb" id="10090-ENSMUSP00000023952"/>
<dbReference type="PeptideAtlas" id="P11679"/>
<dbReference type="ProteomicsDB" id="269446"/>
<dbReference type="Antibodypedia" id="3437">
    <property type="antibodies" value="3647 antibodies from 53 providers"/>
</dbReference>
<dbReference type="DNASU" id="16691"/>
<dbReference type="Ensembl" id="ENSMUST00000023952.10">
    <property type="protein sequence ID" value="ENSMUSP00000023952.9"/>
    <property type="gene ID" value="ENSMUSG00000049382.11"/>
</dbReference>
<dbReference type="GeneID" id="16691"/>
<dbReference type="KEGG" id="mmu:16691"/>
<dbReference type="UCSC" id="uc007xui.1">
    <property type="organism name" value="mouse"/>
</dbReference>
<dbReference type="AGR" id="MGI:96705"/>
<dbReference type="CTD" id="3856"/>
<dbReference type="MGI" id="MGI:96705">
    <property type="gene designation" value="Krt8"/>
</dbReference>
<dbReference type="VEuPathDB" id="HostDB:ENSMUSG00000049382"/>
<dbReference type="eggNOG" id="ENOG502QURK">
    <property type="taxonomic scope" value="Eukaryota"/>
</dbReference>
<dbReference type="GeneTree" id="ENSGT00940000153339"/>
<dbReference type="HOGENOM" id="CLU_012560_5_4_1"/>
<dbReference type="InParanoid" id="P11679"/>
<dbReference type="OMA" id="EMTRNIN"/>
<dbReference type="OrthoDB" id="2441647at2759"/>
<dbReference type="PhylomeDB" id="P11679"/>
<dbReference type="TreeFam" id="TF317854"/>
<dbReference type="Reactome" id="R-MMU-6805567">
    <property type="pathway name" value="Keratinization"/>
</dbReference>
<dbReference type="Reactome" id="R-MMU-6809371">
    <property type="pathway name" value="Formation of the cornified envelope"/>
</dbReference>
<dbReference type="BioGRID-ORCS" id="16691">
    <property type="hits" value="2 hits in 78 CRISPR screens"/>
</dbReference>
<dbReference type="ChiTaRS" id="Krt8">
    <property type="organism name" value="mouse"/>
</dbReference>
<dbReference type="PRO" id="PR:P11679"/>
<dbReference type="Proteomes" id="UP000000589">
    <property type="component" value="Chromosome 15"/>
</dbReference>
<dbReference type="RNAct" id="P11679">
    <property type="molecule type" value="protein"/>
</dbReference>
<dbReference type="Bgee" id="ENSMUSG00000049382">
    <property type="expression patterns" value="Expressed in ileum and 123 other cell types or tissues"/>
</dbReference>
<dbReference type="GO" id="GO:0016327">
    <property type="term" value="C:apicolateral plasma membrane"/>
    <property type="evidence" value="ECO:0000314"/>
    <property type="project" value="UniProtKB"/>
</dbReference>
<dbReference type="GO" id="GO:0071944">
    <property type="term" value="C:cell periphery"/>
    <property type="evidence" value="ECO:0000314"/>
    <property type="project" value="MGI"/>
</dbReference>
<dbReference type="GO" id="GO:0005911">
    <property type="term" value="C:cell-cell junction"/>
    <property type="evidence" value="ECO:0000314"/>
    <property type="project" value="MGI"/>
</dbReference>
<dbReference type="GO" id="GO:0005882">
    <property type="term" value="C:intermediate filament"/>
    <property type="evidence" value="ECO:0000314"/>
    <property type="project" value="MGI"/>
</dbReference>
<dbReference type="GO" id="GO:0045095">
    <property type="term" value="C:keratin filament"/>
    <property type="evidence" value="ECO:0000266"/>
    <property type="project" value="ComplexPortal"/>
</dbReference>
<dbReference type="GO" id="GO:0016363">
    <property type="term" value="C:nuclear matrix"/>
    <property type="evidence" value="ECO:0007669"/>
    <property type="project" value="UniProtKB-SubCell"/>
</dbReference>
<dbReference type="GO" id="GO:0005654">
    <property type="term" value="C:nucleoplasm"/>
    <property type="evidence" value="ECO:0007669"/>
    <property type="project" value="UniProtKB-SubCell"/>
</dbReference>
<dbReference type="GO" id="GO:0042383">
    <property type="term" value="C:sarcolemma"/>
    <property type="evidence" value="ECO:0000314"/>
    <property type="project" value="MGI"/>
</dbReference>
<dbReference type="GO" id="GO:0030018">
    <property type="term" value="C:Z disc"/>
    <property type="evidence" value="ECO:0000314"/>
    <property type="project" value="MGI"/>
</dbReference>
<dbReference type="GO" id="GO:0097110">
    <property type="term" value="F:scaffold protein binding"/>
    <property type="evidence" value="ECO:0007669"/>
    <property type="project" value="Ensembl"/>
</dbReference>
<dbReference type="GO" id="GO:0060706">
    <property type="term" value="P:cell differentiation involved in embryonic placenta development"/>
    <property type="evidence" value="ECO:0000316"/>
    <property type="project" value="MGI"/>
</dbReference>
<dbReference type="GO" id="GO:0097191">
    <property type="term" value="P:extrinsic apoptotic signaling pathway"/>
    <property type="evidence" value="ECO:0000315"/>
    <property type="project" value="MGI"/>
</dbReference>
<dbReference type="GO" id="GO:0097284">
    <property type="term" value="P:hepatocyte apoptotic process"/>
    <property type="evidence" value="ECO:0000315"/>
    <property type="project" value="MGI"/>
</dbReference>
<dbReference type="GO" id="GO:0051707">
    <property type="term" value="P:response to other organism"/>
    <property type="evidence" value="ECO:0000315"/>
    <property type="project" value="MGI"/>
</dbReference>
<dbReference type="GO" id="GO:0033209">
    <property type="term" value="P:tumor necrosis factor-mediated signaling pathway"/>
    <property type="evidence" value="ECO:0000315"/>
    <property type="project" value="MGI"/>
</dbReference>
<dbReference type="FunFam" id="1.20.5.1160:FF:000001">
    <property type="entry name" value="Keratin type II"/>
    <property type="match status" value="1"/>
</dbReference>
<dbReference type="FunFam" id="1.20.5.170:FF:000004">
    <property type="entry name" value="Keratin, type II cytoskeletal 5"/>
    <property type="match status" value="1"/>
</dbReference>
<dbReference type="FunFam" id="1.20.5.500:FF:000001">
    <property type="entry name" value="Type II keratin 23"/>
    <property type="match status" value="1"/>
</dbReference>
<dbReference type="Gene3D" id="1.20.5.170">
    <property type="match status" value="1"/>
</dbReference>
<dbReference type="Gene3D" id="1.20.5.500">
    <property type="entry name" value="Single helix bin"/>
    <property type="match status" value="1"/>
</dbReference>
<dbReference type="Gene3D" id="1.20.5.1160">
    <property type="entry name" value="Vasodilator-stimulated phosphoprotein"/>
    <property type="match status" value="1"/>
</dbReference>
<dbReference type="InterPro" id="IPR018039">
    <property type="entry name" value="IF_conserved"/>
</dbReference>
<dbReference type="InterPro" id="IPR039008">
    <property type="entry name" value="IF_rod_dom"/>
</dbReference>
<dbReference type="InterPro" id="IPR032444">
    <property type="entry name" value="Keratin_2_head"/>
</dbReference>
<dbReference type="InterPro" id="IPR003054">
    <property type="entry name" value="Keratin_II"/>
</dbReference>
<dbReference type="PANTHER" id="PTHR45616">
    <property type="entry name" value="GATA-TYPE DOMAIN-CONTAINING PROTEIN"/>
    <property type="match status" value="1"/>
</dbReference>
<dbReference type="PANTHER" id="PTHR45616:SF26">
    <property type="entry name" value="KERATIN, TYPE II CYTOSKELETAL 8"/>
    <property type="match status" value="1"/>
</dbReference>
<dbReference type="Pfam" id="PF00038">
    <property type="entry name" value="Filament"/>
    <property type="match status" value="1"/>
</dbReference>
<dbReference type="Pfam" id="PF16208">
    <property type="entry name" value="Keratin_2_head"/>
    <property type="match status" value="1"/>
</dbReference>
<dbReference type="PRINTS" id="PR01276">
    <property type="entry name" value="TYPE2KERATIN"/>
</dbReference>
<dbReference type="SMART" id="SM01391">
    <property type="entry name" value="Filament"/>
    <property type="match status" value="1"/>
</dbReference>
<dbReference type="SUPFAM" id="SSF64593">
    <property type="entry name" value="Intermediate filament protein, coiled coil region"/>
    <property type="match status" value="3"/>
</dbReference>
<dbReference type="PROSITE" id="PS00226">
    <property type="entry name" value="IF_ROD_1"/>
    <property type="match status" value="1"/>
</dbReference>
<dbReference type="PROSITE" id="PS51842">
    <property type="entry name" value="IF_ROD_2"/>
    <property type="match status" value="1"/>
</dbReference>
<organism>
    <name type="scientific">Mus musculus</name>
    <name type="common">Mouse</name>
    <dbReference type="NCBI Taxonomy" id="10090"/>
    <lineage>
        <taxon>Eukaryota</taxon>
        <taxon>Metazoa</taxon>
        <taxon>Chordata</taxon>
        <taxon>Craniata</taxon>
        <taxon>Vertebrata</taxon>
        <taxon>Euteleostomi</taxon>
        <taxon>Mammalia</taxon>
        <taxon>Eutheria</taxon>
        <taxon>Euarchontoglires</taxon>
        <taxon>Glires</taxon>
        <taxon>Rodentia</taxon>
        <taxon>Myomorpha</taxon>
        <taxon>Muroidea</taxon>
        <taxon>Muridae</taxon>
        <taxon>Murinae</taxon>
        <taxon>Mus</taxon>
        <taxon>Mus</taxon>
    </lineage>
</organism>
<name>K2C8_MOUSE</name>
<protein>
    <recommendedName>
        <fullName>Keratin, type II cytoskeletal 8</fullName>
    </recommendedName>
    <alternativeName>
        <fullName>Cytokeratin endo A</fullName>
    </alternativeName>
    <alternativeName>
        <fullName>Cytokeratin-8</fullName>
        <shortName>CK-8</shortName>
    </alternativeName>
    <alternativeName>
        <fullName>Keratin-8</fullName>
        <shortName>K8</shortName>
    </alternativeName>
    <alternativeName>
        <fullName>Type-II keratin Kb8</fullName>
    </alternativeName>
</protein>
<comment type="function">
    <text evidence="1">Together with KRT19, helps to link the contractile apparatus to dystrophin at the costameres of striated muscle.</text>
</comment>
<comment type="subunit">
    <text evidence="2 6 8 9">Heterotetramer of two type I and two type II keratins (PubMed:24940650). Forms a heterodimer with KRT18 (PubMed:24940650). Associates with KRT20 (PubMed:12857878). Interacts with PLEC isoform 1C, when in a heterodimer with KRT18 (PubMed:24940650). Interacts with PNN (By similarity). When associated with KRT19, interacts with DMD. Interacts with TCHP (By similarity). Interacts with APEX1 (By similarity). Interacts with GPER1 (By similarity). Interacts with EPPK1 (PubMed:25617501). Interacts with PKP1 and PKP2 (By similarity).</text>
</comment>
<comment type="subcellular location">
    <subcellularLocation>
        <location evidence="3">Cytoplasm</location>
    </subcellularLocation>
    <subcellularLocation>
        <location evidence="3">Nucleus</location>
        <location evidence="3">Nucleoplasm</location>
    </subcellularLocation>
    <subcellularLocation>
        <location evidence="3">Nucleus matrix</location>
    </subcellularLocation>
</comment>
<comment type="tissue specificity">
    <text evidence="6">Expressed in abundance in the epithelia of colon, bladder, ileum, and stomach, with lower expression observed in earskin (at protein level). Also expressed in pancreas, liver, dudenum and jejunum.</text>
</comment>
<comment type="PTM">
    <text evidence="1">Phosphorylation on serine residues is enhanced during EGF stimulation and mitosis. Ser-80 phosphorylation plays an important role in keratin filament reorganization (By similarity).</text>
</comment>
<comment type="PTM">
    <text evidence="1">O-glycosylated. O-GlcNAcylation at multiple sites increases solubility, and decreases stability by inducing proteasomal degradation (By similarity).</text>
</comment>
<comment type="PTM">
    <text evidence="1">O-glycosylated (O-GlcNAcylated), in a cell cycle-dependent manner.</text>
</comment>
<comment type="miscellaneous">
    <text>There are two types of cytoskeletal and microfibrillar keratin: I (acidic; 40-55 kDa) and II (neutral to basic; 56-70 kDa).</text>
</comment>
<comment type="similarity">
    <text evidence="4">Belongs to the intermediate filament family.</text>
</comment>
<comment type="sequence caution" evidence="10">
    <conflict type="erroneous initiation">
        <sequence resource="EMBL-CDS" id="AAA37551"/>
    </conflict>
    <text>Truncated N-terminus.</text>
</comment>
<gene>
    <name type="primary">Krt8</name>
    <name type="synonym">Krt2-8</name>
</gene>
<accession>P11679</accession>
<accession>Q3KQK5</accession>
<accession>Q3TGI1</accession>
<accession>Q3TJE1</accession>
<accession>Q3TKY7</accession>
<accession>Q61463</accession>
<accession>Q61518</accession>
<accession>Q61519</accession>
<feature type="chain" id="PRO_0000063741" description="Keratin, type II cytoskeletal 8">
    <location>
        <begin position="1"/>
        <end position="490"/>
    </location>
</feature>
<feature type="domain" description="IF rod" evidence="4">
    <location>
        <begin position="97"/>
        <end position="408"/>
    </location>
</feature>
<feature type="region of interest" description="Head">
    <location>
        <begin position="1"/>
        <end position="96"/>
    </location>
</feature>
<feature type="region of interest" description="Disordered" evidence="5">
    <location>
        <begin position="1"/>
        <end position="48"/>
    </location>
</feature>
<feature type="region of interest" description="Coil 1A">
    <location>
        <begin position="97"/>
        <end position="132"/>
    </location>
</feature>
<feature type="region of interest" description="Linker 1">
    <location>
        <begin position="133"/>
        <end position="149"/>
    </location>
</feature>
<feature type="region of interest" description="Coil 1B">
    <location>
        <begin position="150"/>
        <end position="241"/>
    </location>
</feature>
<feature type="region of interest" description="Linker 12">
    <location>
        <begin position="242"/>
        <end position="265"/>
    </location>
</feature>
<feature type="region of interest" description="Coil 2">
    <location>
        <begin position="266"/>
        <end position="403"/>
    </location>
</feature>
<feature type="region of interest" description="Necessary for interaction with PNN" evidence="1">
    <location>
        <begin position="267"/>
        <end position="387"/>
    </location>
</feature>
<feature type="region of interest" description="Tail">
    <location>
        <begin position="404"/>
        <end position="490"/>
    </location>
</feature>
<feature type="compositionally biased region" description="Polar residues" evidence="5">
    <location>
        <begin position="1"/>
        <end position="27"/>
    </location>
</feature>
<feature type="compositionally biased region" description="Low complexity" evidence="5">
    <location>
        <begin position="34"/>
        <end position="48"/>
    </location>
</feature>
<feature type="site" description="Stutter">
    <location>
        <position position="347"/>
    </location>
</feature>
<feature type="modified residue" description="Phosphoserine; by PKC/PRKCE" evidence="2">
    <location>
        <position position="9"/>
    </location>
</feature>
<feature type="modified residue" description="Phosphoserine" evidence="2">
    <location>
        <position position="13"/>
    </location>
</feature>
<feature type="modified residue" description="Phosphoserine" evidence="2">
    <location>
        <position position="15"/>
    </location>
</feature>
<feature type="modified residue" description="Phosphoserine" evidence="11 12">
    <location>
        <position position="21"/>
    </location>
</feature>
<feature type="modified residue" description="Phosphoserine" evidence="2">
    <location>
        <position position="22"/>
    </location>
</feature>
<feature type="modified residue" description="Omega-N-methylarginine" evidence="2">
    <location>
        <position position="23"/>
    </location>
</feature>
<feature type="modified residue" description="Phosphoserine; by PKC/PRKCE" evidence="2">
    <location>
        <position position="24"/>
    </location>
</feature>
<feature type="modified residue" description="Phosphothreonine" evidence="3">
    <location>
        <position position="26"/>
    </location>
</feature>
<feature type="modified residue" description="Phosphoserine" evidence="2">
    <location>
        <position position="27"/>
    </location>
</feature>
<feature type="modified residue" description="Omega-N-methylarginine" evidence="2">
    <location>
        <position position="32"/>
    </location>
</feature>
<feature type="modified residue" description="Phosphoserine" evidence="2">
    <location>
        <position position="34"/>
    </location>
</feature>
<feature type="modified residue" description="Phosphoserine" evidence="3">
    <location>
        <position position="37"/>
    </location>
</feature>
<feature type="modified residue" description="Phosphoserine" evidence="2">
    <location>
        <position position="39"/>
    </location>
</feature>
<feature type="modified residue" description="Omega-N-methylarginine" evidence="2">
    <location>
        <position position="40"/>
    </location>
</feature>
<feature type="modified residue" description="Phosphoserine" evidence="2">
    <location>
        <position position="43"/>
    </location>
</feature>
<feature type="modified residue" description="Phosphoserine" evidence="3">
    <location>
        <position position="44"/>
    </location>
</feature>
<feature type="modified residue" description="Phosphoserine" evidence="3">
    <location>
        <position position="47"/>
    </location>
</feature>
<feature type="modified residue" description="Asymmetric dimethylarginine; alternate" evidence="2">
    <location>
        <position position="49"/>
    </location>
</feature>
<feature type="modified residue" description="Omega-N-methylarginine; alternate" evidence="2">
    <location>
        <position position="49"/>
    </location>
</feature>
<feature type="modified residue" description="Phosphoserine" evidence="3">
    <location>
        <position position="51"/>
    </location>
</feature>
<feature type="modified residue" description="Phosphoserine; by MAPK" evidence="7">
    <location>
        <position position="80"/>
    </location>
</feature>
<feature type="modified residue" description="N6-malonyllysine" evidence="1">
    <location>
        <position position="107"/>
    </location>
</feature>
<feature type="modified residue" description="N6-acetyllysine" evidence="2">
    <location>
        <position position="213"/>
    </location>
</feature>
<feature type="modified residue" description="Phosphoserine" evidence="12">
    <location>
        <position position="259"/>
    </location>
</feature>
<feature type="modified residue" description="Phosphoserine" evidence="2">
    <location>
        <position position="280"/>
    </location>
</feature>
<feature type="modified residue" description="N6-acetyllysine; alternate" evidence="2">
    <location>
        <position position="301"/>
    </location>
</feature>
<feature type="modified residue" description="N6-acetyllysine; alternate" evidence="2">
    <location>
        <position position="331"/>
    </location>
</feature>
<feature type="modified residue" description="Phosphoserine" evidence="2">
    <location>
        <position position="336"/>
    </location>
</feature>
<feature type="modified residue" description="Phosphoserine" evidence="2">
    <location>
        <position position="406"/>
    </location>
</feature>
<feature type="modified residue" description="Phosphoserine" evidence="2">
    <location>
        <position position="410"/>
    </location>
</feature>
<feature type="modified residue" description="Phosphoserine" evidence="2">
    <location>
        <position position="416"/>
    </location>
</feature>
<feature type="modified residue" description="Phosphoserine" evidence="3">
    <location>
        <position position="423"/>
    </location>
</feature>
<feature type="modified residue" description="Phosphoserine" evidence="3">
    <location>
        <position position="430"/>
    </location>
</feature>
<feature type="modified residue" description="Phosphoserine" evidence="3">
    <location>
        <position position="432"/>
    </location>
</feature>
<feature type="modified residue" description="Phosphoserine" evidence="2">
    <location>
        <position position="438"/>
    </location>
</feature>
<feature type="modified residue" description="Phosphoserine" evidence="11 12">
    <location>
        <position position="482"/>
    </location>
</feature>
<feature type="modified residue" description="Phosphoserine" evidence="2">
    <location>
        <position position="484"/>
    </location>
</feature>
<feature type="modified residue" description="Phosphoserine" evidence="12">
    <location>
        <position position="485"/>
    </location>
</feature>
<feature type="modified residue" description="Phosphoserine" evidence="11 12">
    <location>
        <position position="489"/>
    </location>
</feature>
<feature type="cross-link" description="Glycyl lysine isopeptide (Lys-Gly) (interchain with G-Cter in SUMO2)" evidence="2">
    <location>
        <position position="11"/>
    </location>
</feature>
<feature type="cross-link" description="Glycyl lysine isopeptide (Lys-Gly) (interchain with G-Cter in SUMO2)" evidence="2">
    <location>
        <position position="128"/>
    </location>
</feature>
<feature type="cross-link" description="Glycyl lysine isopeptide (Lys-Gly) (interchain with G-Cter in SUMO2)" evidence="2">
    <location>
        <position position="136"/>
    </location>
</feature>
<feature type="cross-link" description="Glycyl lysine isopeptide (Lys-Gly) (interchain with G-Cter in SUMO1); alternate" evidence="2">
    <location>
        <position position="203"/>
    </location>
</feature>
<feature type="cross-link" description="Glycyl lysine isopeptide (Lys-Gly) (interchain with G-Cter in SUMO2); alternate" evidence="2">
    <location>
        <position position="203"/>
    </location>
</feature>
<feature type="cross-link" description="Glycyl lysine isopeptide (Lys-Gly) (interchain with G-Cter in SUMO2)" evidence="2">
    <location>
        <position position="291"/>
    </location>
</feature>
<feature type="cross-link" description="Glycyl lysine isopeptide (Lys-Gly) (interchain with G-Cter in SUMO2); alternate" evidence="2">
    <location>
        <position position="301"/>
    </location>
</feature>
<feature type="cross-link" description="Glycyl lysine isopeptide (Lys-Gly) (interchain with G-Cter in SUMO2)" evidence="2">
    <location>
        <position position="310"/>
    </location>
</feature>
<feature type="cross-link" description="Glycyl lysine isopeptide (Lys-Gly) (interchain with G-Cter in SUMO2); alternate" evidence="2">
    <location>
        <position position="331"/>
    </location>
</feature>
<feature type="cross-link" description="Glycyl lysine isopeptide (Lys-Gly) (interchain with G-Cter in SUMO2)" evidence="2">
    <location>
        <position position="399"/>
    </location>
</feature>
<feature type="cross-link" description="Glycyl lysine isopeptide (Lys-Gly) (interchain with G-Cter in SUMO1); alternate" evidence="2">
    <location>
        <position position="479"/>
    </location>
</feature>
<feature type="cross-link" description="Glycyl lysine isopeptide (Lys-Gly) (interchain with G-Cter in SUMO2); alternate" evidence="2">
    <location>
        <position position="479"/>
    </location>
</feature>
<feature type="sequence conflict" description="In Ref. 3; AAA37548." evidence="10" ref="3">
    <original>MSTSGPRAFSSRSFTSGPGARISS</original>
    <variation>NVYSVGLLASARSGSWTGSASTA</variation>
    <location>
        <begin position="12"/>
        <end position="35"/>
    </location>
</feature>
<feature type="sequence conflict" description="In Ref. 3; AAA37548." evidence="10" ref="3">
    <original>RVGSSSSSFRGSMGTGVGL</original>
    <variation>GRACQLGSSFGEAWHGVS</variation>
    <location>
        <begin position="40"/>
        <end position="58"/>
    </location>
</feature>
<feature type="sequence conflict" description="In Ref. 6; AAI06155." evidence="10" ref="6">
    <original>M</original>
    <variation>L</variation>
    <location>
        <position position="52"/>
    </location>
</feature>
<feature type="sequence conflict" description="In Ref. 3; AAA37548." evidence="10" ref="3">
    <original>N</original>
    <variation>D</variation>
    <location>
        <position position="75"/>
    </location>
</feature>
<feature type="sequence conflict" description="In Ref. 3; AAA37548." evidence="10" ref="3">
    <original>KLEVD</original>
    <variation>QLSL</variation>
    <location>
        <begin position="83"/>
        <end position="87"/>
    </location>
</feature>
<feature type="sequence conflict" description="In Ref. 5; BAE39554." evidence="10" ref="5">
    <original>F</original>
    <variation>L</variation>
    <location>
        <position position="108"/>
    </location>
</feature>
<feature type="sequence conflict" description="In Ref. 1; CAA31278." evidence="10" ref="1">
    <original>NK</original>
    <variation>QQ</variation>
    <location>
        <begin position="190"/>
        <end position="191"/>
    </location>
</feature>
<feature type="sequence conflict" description="In Ref. 5; BAE40567." evidence="10" ref="5">
    <original>E</original>
    <variation>G</variation>
    <location>
        <position position="312"/>
    </location>
</feature>
<feature type="sequence conflict" description="In Ref. 1; CAA31278." evidence="10" ref="1">
    <location>
        <position position="325"/>
    </location>
</feature>
<feature type="sequence conflict" description="In Ref. 1; CAA31278." evidence="10" ref="1">
    <original>R</original>
    <variation>P</variation>
    <location>
        <position position="368"/>
    </location>
</feature>
<feature type="sequence conflict" description="In Ref. 5; BAE38980/BAE39006." evidence="10" ref="5">
    <original>N</original>
    <variation>K</variation>
    <location>
        <position position="385"/>
    </location>
</feature>
<reference key="1">
    <citation type="journal article" date="1988" name="Differentiation">
        <title>Sequence analysis of murine cytokeratin endo A (no. 8) cDNA. Evidence for mRNA species initiated upstream of the normal 5' end in PCC4 cells.</title>
        <authorList>
            <person name="Semat A."/>
            <person name="Vasseur M."/>
            <person name="Maillet L."/>
            <person name="Brulet P."/>
            <person name="Darmon Y.M."/>
        </authorList>
    </citation>
    <scope>NUCLEOTIDE SEQUENCE [GENOMIC DNA / MRNA]</scope>
</reference>
<reference key="2">
    <citation type="journal article" date="1988" name="Gene">
        <title>Nucleotide sequence of mouse EndoA cytokeratin cDNA reveals polypeptide characteristics of the type-II keratin subfamily.</title>
        <authorList>
            <person name="Morita T."/>
            <person name="Tondella M.L.C."/>
            <person name="Takemoto Y."/>
            <person name="Hashido K."/>
            <person name="Ichinose Y."/>
            <person name="Nozaki M."/>
            <person name="Matsushiro A."/>
        </authorList>
    </citation>
    <scope>NUCLEOTIDE SEQUENCE [MRNA]</scope>
</reference>
<reference key="3">
    <citation type="journal article" date="1988" name="Gene">
        <title>Complete sequence of the mouse type-II keratin EndoA: its amino-terminal region resembles mitochondrial signal peptides.</title>
        <authorList>
            <person name="Ouellet T."/>
            <person name="Levac P."/>
            <person name="Royal A."/>
        </authorList>
    </citation>
    <scope>NUCLEOTIDE SEQUENCE [MRNA]</scope>
</reference>
<reference key="4">
    <citation type="journal article" date="1991" name="Gene">
        <title>Sequence of the EndoA gene encoding mouse cytokeratin and its methylation state in the CpG-rich region.</title>
        <authorList>
            <person name="Tamai Y."/>
            <person name="Takemoto Y."/>
            <person name="Matsumoto M."/>
            <person name="Morita T."/>
            <person name="Matsushiro A."/>
            <person name="Nozaki M."/>
        </authorList>
    </citation>
    <scope>NUCLEOTIDE SEQUENCE [GENOMIC DNA]</scope>
    <source>
        <strain>129/Sv</strain>
        <tissue>Liver</tissue>
    </source>
</reference>
<reference key="5">
    <citation type="journal article" date="2005" name="Science">
        <title>The transcriptional landscape of the mammalian genome.</title>
        <authorList>
            <person name="Carninci P."/>
            <person name="Kasukawa T."/>
            <person name="Katayama S."/>
            <person name="Gough J."/>
            <person name="Frith M.C."/>
            <person name="Maeda N."/>
            <person name="Oyama R."/>
            <person name="Ravasi T."/>
            <person name="Lenhard B."/>
            <person name="Wells C."/>
            <person name="Kodzius R."/>
            <person name="Shimokawa K."/>
            <person name="Bajic V.B."/>
            <person name="Brenner S.E."/>
            <person name="Batalov S."/>
            <person name="Forrest A.R."/>
            <person name="Zavolan M."/>
            <person name="Davis M.J."/>
            <person name="Wilming L.G."/>
            <person name="Aidinis V."/>
            <person name="Allen J.E."/>
            <person name="Ambesi-Impiombato A."/>
            <person name="Apweiler R."/>
            <person name="Aturaliya R.N."/>
            <person name="Bailey T.L."/>
            <person name="Bansal M."/>
            <person name="Baxter L."/>
            <person name="Beisel K.W."/>
            <person name="Bersano T."/>
            <person name="Bono H."/>
            <person name="Chalk A.M."/>
            <person name="Chiu K.P."/>
            <person name="Choudhary V."/>
            <person name="Christoffels A."/>
            <person name="Clutterbuck D.R."/>
            <person name="Crowe M.L."/>
            <person name="Dalla E."/>
            <person name="Dalrymple B.P."/>
            <person name="de Bono B."/>
            <person name="Della Gatta G."/>
            <person name="di Bernardo D."/>
            <person name="Down T."/>
            <person name="Engstrom P."/>
            <person name="Fagiolini M."/>
            <person name="Faulkner G."/>
            <person name="Fletcher C.F."/>
            <person name="Fukushima T."/>
            <person name="Furuno M."/>
            <person name="Futaki S."/>
            <person name="Gariboldi M."/>
            <person name="Georgii-Hemming P."/>
            <person name="Gingeras T.R."/>
            <person name="Gojobori T."/>
            <person name="Green R.E."/>
            <person name="Gustincich S."/>
            <person name="Harbers M."/>
            <person name="Hayashi Y."/>
            <person name="Hensch T.K."/>
            <person name="Hirokawa N."/>
            <person name="Hill D."/>
            <person name="Huminiecki L."/>
            <person name="Iacono M."/>
            <person name="Ikeo K."/>
            <person name="Iwama A."/>
            <person name="Ishikawa T."/>
            <person name="Jakt M."/>
            <person name="Kanapin A."/>
            <person name="Katoh M."/>
            <person name="Kawasawa Y."/>
            <person name="Kelso J."/>
            <person name="Kitamura H."/>
            <person name="Kitano H."/>
            <person name="Kollias G."/>
            <person name="Krishnan S.P."/>
            <person name="Kruger A."/>
            <person name="Kummerfeld S.K."/>
            <person name="Kurochkin I.V."/>
            <person name="Lareau L.F."/>
            <person name="Lazarevic D."/>
            <person name="Lipovich L."/>
            <person name="Liu J."/>
            <person name="Liuni S."/>
            <person name="McWilliam S."/>
            <person name="Madan Babu M."/>
            <person name="Madera M."/>
            <person name="Marchionni L."/>
            <person name="Matsuda H."/>
            <person name="Matsuzawa S."/>
            <person name="Miki H."/>
            <person name="Mignone F."/>
            <person name="Miyake S."/>
            <person name="Morris K."/>
            <person name="Mottagui-Tabar S."/>
            <person name="Mulder N."/>
            <person name="Nakano N."/>
            <person name="Nakauchi H."/>
            <person name="Ng P."/>
            <person name="Nilsson R."/>
            <person name="Nishiguchi S."/>
            <person name="Nishikawa S."/>
            <person name="Nori F."/>
            <person name="Ohara O."/>
            <person name="Okazaki Y."/>
            <person name="Orlando V."/>
            <person name="Pang K.C."/>
            <person name="Pavan W.J."/>
            <person name="Pavesi G."/>
            <person name="Pesole G."/>
            <person name="Petrovsky N."/>
            <person name="Piazza S."/>
            <person name="Reed J."/>
            <person name="Reid J.F."/>
            <person name="Ring B.Z."/>
            <person name="Ringwald M."/>
            <person name="Rost B."/>
            <person name="Ruan Y."/>
            <person name="Salzberg S.L."/>
            <person name="Sandelin A."/>
            <person name="Schneider C."/>
            <person name="Schoenbach C."/>
            <person name="Sekiguchi K."/>
            <person name="Semple C.A."/>
            <person name="Seno S."/>
            <person name="Sessa L."/>
            <person name="Sheng Y."/>
            <person name="Shibata Y."/>
            <person name="Shimada H."/>
            <person name="Shimada K."/>
            <person name="Silva D."/>
            <person name="Sinclair B."/>
            <person name="Sperling S."/>
            <person name="Stupka E."/>
            <person name="Sugiura K."/>
            <person name="Sultana R."/>
            <person name="Takenaka Y."/>
            <person name="Taki K."/>
            <person name="Tammoja K."/>
            <person name="Tan S.L."/>
            <person name="Tang S."/>
            <person name="Taylor M.S."/>
            <person name="Tegner J."/>
            <person name="Teichmann S.A."/>
            <person name="Ueda H.R."/>
            <person name="van Nimwegen E."/>
            <person name="Verardo R."/>
            <person name="Wei C.L."/>
            <person name="Yagi K."/>
            <person name="Yamanishi H."/>
            <person name="Zabarovsky E."/>
            <person name="Zhu S."/>
            <person name="Zimmer A."/>
            <person name="Hide W."/>
            <person name="Bult C."/>
            <person name="Grimmond S.M."/>
            <person name="Teasdale R.D."/>
            <person name="Liu E.T."/>
            <person name="Brusic V."/>
            <person name="Quackenbush J."/>
            <person name="Wahlestedt C."/>
            <person name="Mattick J.S."/>
            <person name="Hume D.A."/>
            <person name="Kai C."/>
            <person name="Sasaki D."/>
            <person name="Tomaru Y."/>
            <person name="Fukuda S."/>
            <person name="Kanamori-Katayama M."/>
            <person name="Suzuki M."/>
            <person name="Aoki J."/>
            <person name="Arakawa T."/>
            <person name="Iida J."/>
            <person name="Imamura K."/>
            <person name="Itoh M."/>
            <person name="Kato T."/>
            <person name="Kawaji H."/>
            <person name="Kawagashira N."/>
            <person name="Kawashima T."/>
            <person name="Kojima M."/>
            <person name="Kondo S."/>
            <person name="Konno H."/>
            <person name="Nakano K."/>
            <person name="Ninomiya N."/>
            <person name="Nishio T."/>
            <person name="Okada M."/>
            <person name="Plessy C."/>
            <person name="Shibata K."/>
            <person name="Shiraki T."/>
            <person name="Suzuki S."/>
            <person name="Tagami M."/>
            <person name="Waki K."/>
            <person name="Watahiki A."/>
            <person name="Okamura-Oho Y."/>
            <person name="Suzuki H."/>
            <person name="Kawai J."/>
            <person name="Hayashizaki Y."/>
        </authorList>
    </citation>
    <scope>NUCLEOTIDE SEQUENCE [LARGE SCALE MRNA]</scope>
    <source>
        <strain>C57BL/6J</strain>
        <strain>NOD</strain>
        <tissue>Amnion</tissue>
        <tissue>Blastocyst</tissue>
        <tissue>Embryo</tissue>
        <tissue>Placenta</tissue>
        <tissue>Stomach</tissue>
        <tissue>Thymus</tissue>
    </source>
</reference>
<reference key="6">
    <citation type="journal article" date="2004" name="Genome Res.">
        <title>The status, quality, and expansion of the NIH full-length cDNA project: the Mammalian Gene Collection (MGC).</title>
        <authorList>
            <consortium name="The MGC Project Team"/>
        </authorList>
    </citation>
    <scope>NUCLEOTIDE SEQUENCE [LARGE SCALE MRNA]</scope>
    <source>
        <strain>Czech II</strain>
        <strain>FVB/N</strain>
        <tissue>Colon</tissue>
        <tissue>Mammary tumor</tissue>
    </source>
</reference>
<reference key="7">
    <citation type="submission" date="2009-01" db="UniProtKB">
        <authorList>
            <person name="Lubec G."/>
            <person name="Sunyer B."/>
            <person name="Chen W.-Q."/>
        </authorList>
    </citation>
    <scope>PROTEIN SEQUENCE OF 103-114</scope>
    <scope>IDENTIFICATION BY MASS SPECTROMETRY</scope>
    <source>
        <strain>OF1</strain>
        <tissue>Hippocampus</tissue>
    </source>
</reference>
<reference key="8">
    <citation type="journal article" date="2003" name="Mol. Biol. Cell">
        <title>Keratin 20 helps maintain intermediate filament organization in intestinal epithelia.</title>
        <authorList>
            <person name="Zhou Q."/>
            <person name="Toivola D.M."/>
            <person name="Feng N."/>
            <person name="Greenberg H.B."/>
            <person name="Franke W.W."/>
            <person name="Omary M.B."/>
        </authorList>
    </citation>
    <scope>INTERACTION WITH KRT20</scope>
    <scope>TISSUE SPECIFICITY</scope>
</reference>
<reference key="9">
    <citation type="journal article" date="2007" name="Proc. Natl. Acad. Sci. U.S.A.">
        <title>Large-scale phosphorylation analysis of mouse liver.</title>
        <authorList>
            <person name="Villen J."/>
            <person name="Beausoleil S.A."/>
            <person name="Gerber S.A."/>
            <person name="Gygi S.P."/>
        </authorList>
    </citation>
    <scope>PHOSPHORYLATION [LARGE SCALE ANALYSIS] AT SER-21; SER-482 AND SER-489</scope>
    <scope>IDENTIFICATION BY MASS SPECTROMETRY [LARGE SCALE ANALYSIS]</scope>
    <source>
        <tissue>Liver</tissue>
    </source>
</reference>
<reference key="10">
    <citation type="journal article" date="2008" name="J. Proteome Res.">
        <title>Specific phosphopeptide enrichment with immobilized titanium ion affinity chromatography adsorbent for phosphoproteome analysis.</title>
        <authorList>
            <person name="Zhou H."/>
            <person name="Ye M."/>
            <person name="Dong J."/>
            <person name="Han G."/>
            <person name="Jiang X."/>
            <person name="Wu R."/>
            <person name="Zou H."/>
        </authorList>
    </citation>
    <scope>IDENTIFICATION BY MASS SPECTROMETRY [LARGE SCALE ANALYSIS]</scope>
    <source>
        <tissue>Liver</tissue>
    </source>
</reference>
<reference key="11">
    <citation type="journal article" date="2010" name="Cell">
        <title>A tissue-specific atlas of mouse protein phosphorylation and expression.</title>
        <authorList>
            <person name="Huttlin E.L."/>
            <person name="Jedrychowski M.P."/>
            <person name="Elias J.E."/>
            <person name="Goswami T."/>
            <person name="Rad R."/>
            <person name="Beausoleil S.A."/>
            <person name="Villen J."/>
            <person name="Haas W."/>
            <person name="Sowa M.E."/>
            <person name="Gygi S.P."/>
        </authorList>
    </citation>
    <scope>PHOSPHORYLATION [LARGE SCALE ANALYSIS] AT SER-21; SER-259; SER-482; SER-485 AND SER-489</scope>
    <scope>IDENTIFICATION BY MASS SPECTROMETRY [LARGE SCALE ANALYSIS]</scope>
    <source>
        <tissue>Kidney</tissue>
        <tissue>Liver</tissue>
        <tissue>Lung</tissue>
        <tissue>Pancreas</tissue>
        <tissue>Spleen</tissue>
    </source>
</reference>
<reference key="12">
    <citation type="journal article" date="2010" name="J. Biol. Chem.">
        <title>p38 MAP kinase and MAPKAP kinases MK2/3 cooperatively phosphorylate epithelial keratins.</title>
        <authorList>
            <person name="Menon M.B."/>
            <person name="Schwermann J."/>
            <person name="Singh A.K."/>
            <person name="Franz-Wachtel M."/>
            <person name="Pabst O."/>
            <person name="Seidler U."/>
            <person name="Omary M.B."/>
            <person name="Kotlyarov A."/>
            <person name="Gaestel M."/>
        </authorList>
    </citation>
    <scope>PHOSPHORYLATION AT SER-80 BY MAPK</scope>
</reference>
<reference key="13">
    <citation type="journal article" date="2014" name="J. Invest. Dermatol.">
        <title>Interaction of plectin with keratins 5 and 14: dependence on several plectin domains and keratin quaternary structure.</title>
        <authorList>
            <person name="Bouameur J.E."/>
            <person name="Favre B."/>
            <person name="Fontao L."/>
            <person name="Lingasamy P."/>
            <person name="Begre N."/>
            <person name="Borradori L."/>
        </authorList>
    </citation>
    <scope>IDENTIFICATION IN A COMPLEX WITH KRT18</scope>
    <scope>INTERACTION WITH KRT18 AND PLEC</scope>
</reference>
<reference key="14">
    <citation type="journal article" date="2015" name="J. Hepatol.">
        <title>Epiplakin attenuates experimental mouse liver injury by chaperoning keratin reorganization.</title>
        <authorList>
            <person name="Szabo S."/>
            <person name="Woegenstein K.L."/>
            <person name="Oesterreicher C.H."/>
            <person name="Guldiken N."/>
            <person name="Chen Y."/>
            <person name="Doler C."/>
            <person name="Wiche G."/>
            <person name="Boor P."/>
            <person name="Haybaeck J."/>
            <person name="Strnad P."/>
            <person name="Fuchs P."/>
        </authorList>
    </citation>
    <scope>INTERACTION WITH EPPK1</scope>
</reference>